<comment type="subcellular location">
    <subcellularLocation>
        <location evidence="1">Secreted</location>
    </subcellularLocation>
</comment>
<comment type="tissue specificity">
    <text>Expressed by the venom duct.</text>
</comment>
<comment type="domain">
    <text evidence="1">The presence of a 'disulfide through disulfide knot' structurally defines this protein as a knottin.</text>
</comment>
<comment type="domain">
    <text>The cysteine framework is VI/VII (C-C-CC-C-C).</text>
</comment>
<comment type="similarity">
    <text evidence="3">Belongs to the conotoxin O1 superfamily.</text>
</comment>
<reference key="1">
    <citation type="journal article" date="2001" name="Mol. Biol. Evol.">
        <title>Mechanisms for evolving hypervariability: the case of conopeptides.</title>
        <authorList>
            <person name="Conticello S.G."/>
            <person name="Gilad Y."/>
            <person name="Avidan N."/>
            <person name="Ben-Asher E."/>
            <person name="Levy Z."/>
            <person name="Fainzilber M."/>
        </authorList>
    </citation>
    <scope>NUCLEOTIDE SEQUENCE [MRNA]</scope>
    <source>
        <tissue>Venom duct</tissue>
    </source>
</reference>
<keyword id="KW-1015">Disulfide bond</keyword>
<keyword id="KW-0960">Knottin</keyword>
<keyword id="KW-0528">Neurotoxin</keyword>
<keyword id="KW-0964">Secreted</keyword>
<keyword id="KW-0732">Signal</keyword>
<keyword id="KW-0800">Toxin</keyword>
<feature type="signal peptide" evidence="2">
    <location>
        <begin position="1"/>
        <end position="22"/>
    </location>
</feature>
<feature type="propeptide" id="PRO_0000404722" evidence="1">
    <location>
        <begin position="23"/>
        <end position="47"/>
    </location>
</feature>
<feature type="peptide" id="PRO_0000404723" description="Conotoxin ArMKLT2-0322">
    <location>
        <begin position="48"/>
        <end position="77"/>
    </location>
</feature>
<feature type="disulfide bond" evidence="1">
    <location>
        <begin position="49"/>
        <end position="62"/>
    </location>
</feature>
<feature type="disulfide bond" evidence="1">
    <location>
        <begin position="56"/>
        <end position="67"/>
    </location>
</feature>
<feature type="disulfide bond" evidence="1">
    <location>
        <begin position="61"/>
        <end position="74"/>
    </location>
</feature>
<evidence type="ECO:0000250" key="1"/>
<evidence type="ECO:0000255" key="2"/>
<evidence type="ECO:0000305" key="3"/>
<proteinExistence type="evidence at transcript level"/>
<dbReference type="EMBL" id="AF215054">
    <property type="protein sequence ID" value="AAG60482.1"/>
    <property type="molecule type" value="mRNA"/>
</dbReference>
<dbReference type="SMR" id="Q9BP84"/>
<dbReference type="ConoServer" id="741">
    <property type="toxin name" value="Ar6.12 precursor"/>
</dbReference>
<dbReference type="GO" id="GO:0005576">
    <property type="term" value="C:extracellular region"/>
    <property type="evidence" value="ECO:0007669"/>
    <property type="project" value="UniProtKB-SubCell"/>
</dbReference>
<dbReference type="GO" id="GO:0008200">
    <property type="term" value="F:ion channel inhibitor activity"/>
    <property type="evidence" value="ECO:0007669"/>
    <property type="project" value="InterPro"/>
</dbReference>
<dbReference type="GO" id="GO:0090729">
    <property type="term" value="F:toxin activity"/>
    <property type="evidence" value="ECO:0007669"/>
    <property type="project" value="UniProtKB-KW"/>
</dbReference>
<dbReference type="InterPro" id="IPR004214">
    <property type="entry name" value="Conotoxin"/>
</dbReference>
<dbReference type="Pfam" id="PF02950">
    <property type="entry name" value="Conotoxin"/>
    <property type="match status" value="1"/>
</dbReference>
<organism>
    <name type="scientific">Conus arenatus</name>
    <name type="common">Sand-dusted cone</name>
    <dbReference type="NCBI Taxonomy" id="89451"/>
    <lineage>
        <taxon>Eukaryota</taxon>
        <taxon>Metazoa</taxon>
        <taxon>Spiralia</taxon>
        <taxon>Lophotrochozoa</taxon>
        <taxon>Mollusca</taxon>
        <taxon>Gastropoda</taxon>
        <taxon>Caenogastropoda</taxon>
        <taxon>Neogastropoda</taxon>
        <taxon>Conoidea</taxon>
        <taxon>Conidae</taxon>
        <taxon>Conus</taxon>
    </lineage>
</organism>
<protein>
    <recommendedName>
        <fullName>Conotoxin ArMKLT2-0322</fullName>
    </recommendedName>
</protein>
<accession>Q9BP84</accession>
<name>O1612_CONAE</name>
<sequence>MKLTCVLIIAVLFLIVCQLNTADDSRDKQEYRAVRLRDAIRNSRGSRSCGNLGESCSAHRCCPGLMCMGEASICIPY</sequence>